<name>ACP_CHLTA</name>
<proteinExistence type="inferred from homology"/>
<sequence>MSLEDDVKAIIVDQLGVSPEDVKVDSSFIEDLNADSLDLTELIMTLEEKFAFEISEDDAEQLRTVGDVIKYIQERQN</sequence>
<evidence type="ECO:0000255" key="1">
    <source>
        <dbReference type="HAMAP-Rule" id="MF_01217"/>
    </source>
</evidence>
<evidence type="ECO:0000255" key="2">
    <source>
        <dbReference type="PROSITE-ProRule" id="PRU00258"/>
    </source>
</evidence>
<organism>
    <name type="scientific">Chlamydia trachomatis serovar A (strain ATCC VR-571B / DSM 19440 / HAR-13)</name>
    <dbReference type="NCBI Taxonomy" id="315277"/>
    <lineage>
        <taxon>Bacteria</taxon>
        <taxon>Pseudomonadati</taxon>
        <taxon>Chlamydiota</taxon>
        <taxon>Chlamydiia</taxon>
        <taxon>Chlamydiales</taxon>
        <taxon>Chlamydiaceae</taxon>
        <taxon>Chlamydia/Chlamydophila group</taxon>
        <taxon>Chlamydia</taxon>
    </lineage>
</organism>
<gene>
    <name evidence="1" type="primary">acpP</name>
    <name type="ordered locus">CTA_0258</name>
</gene>
<reference key="1">
    <citation type="journal article" date="2005" name="Infect. Immun.">
        <title>Comparative genomic analysis of Chlamydia trachomatis oculotropic and genitotropic strains.</title>
        <authorList>
            <person name="Carlson J.H."/>
            <person name="Porcella S.F."/>
            <person name="McClarty G."/>
            <person name="Caldwell H.D."/>
        </authorList>
    </citation>
    <scope>NUCLEOTIDE SEQUENCE [LARGE SCALE GENOMIC DNA]</scope>
    <source>
        <strain>ATCC VR-571B / DSM 19440 / HAR-13</strain>
    </source>
</reference>
<accession>Q3KMC6</accession>
<comment type="function">
    <text evidence="1">Carrier of the growing fatty acid chain in fatty acid biosynthesis.</text>
</comment>
<comment type="pathway">
    <text evidence="1">Lipid metabolism; fatty acid biosynthesis.</text>
</comment>
<comment type="subcellular location">
    <subcellularLocation>
        <location evidence="1">Cytoplasm</location>
    </subcellularLocation>
</comment>
<comment type="PTM">
    <text evidence="1">4'-phosphopantetheine is transferred from CoA to a specific serine of apo-ACP by AcpS. This modification is essential for activity because fatty acids are bound in thioester linkage to the sulfhydryl of the prosthetic group.</text>
</comment>
<comment type="similarity">
    <text evidence="1">Belongs to the acyl carrier protein (ACP) family.</text>
</comment>
<feature type="chain" id="PRO_1000066589" description="Acyl carrier protein">
    <location>
        <begin position="1"/>
        <end position="77"/>
    </location>
</feature>
<feature type="domain" description="Carrier" evidence="2">
    <location>
        <begin position="1"/>
        <end position="76"/>
    </location>
</feature>
<feature type="modified residue" description="O-(pantetheine 4'-phosphoryl)serine" evidence="2">
    <location>
        <position position="36"/>
    </location>
</feature>
<protein>
    <recommendedName>
        <fullName evidence="1">Acyl carrier protein</fullName>
        <shortName evidence="1">ACP</shortName>
    </recommendedName>
</protein>
<keyword id="KW-0963">Cytoplasm</keyword>
<keyword id="KW-0275">Fatty acid biosynthesis</keyword>
<keyword id="KW-0276">Fatty acid metabolism</keyword>
<keyword id="KW-0444">Lipid biosynthesis</keyword>
<keyword id="KW-0443">Lipid metabolism</keyword>
<keyword id="KW-0596">Phosphopantetheine</keyword>
<keyword id="KW-0597">Phosphoprotein</keyword>
<dbReference type="EMBL" id="CP000051">
    <property type="protein sequence ID" value="AAX50496.1"/>
    <property type="molecule type" value="Genomic_DNA"/>
</dbReference>
<dbReference type="RefSeq" id="WP_009871583.1">
    <property type="nucleotide sequence ID" value="NC_007429.1"/>
</dbReference>
<dbReference type="SMR" id="Q3KMC6"/>
<dbReference type="KEGG" id="cta:CTA_0258"/>
<dbReference type="HOGENOM" id="CLU_108696_5_1_0"/>
<dbReference type="UniPathway" id="UPA00094"/>
<dbReference type="Proteomes" id="UP000002532">
    <property type="component" value="Chromosome"/>
</dbReference>
<dbReference type="GO" id="GO:0005829">
    <property type="term" value="C:cytosol"/>
    <property type="evidence" value="ECO:0007669"/>
    <property type="project" value="TreeGrafter"/>
</dbReference>
<dbReference type="GO" id="GO:0016020">
    <property type="term" value="C:membrane"/>
    <property type="evidence" value="ECO:0007669"/>
    <property type="project" value="GOC"/>
</dbReference>
<dbReference type="GO" id="GO:0000035">
    <property type="term" value="F:acyl binding"/>
    <property type="evidence" value="ECO:0007669"/>
    <property type="project" value="TreeGrafter"/>
</dbReference>
<dbReference type="GO" id="GO:0000036">
    <property type="term" value="F:acyl carrier activity"/>
    <property type="evidence" value="ECO:0007669"/>
    <property type="project" value="UniProtKB-UniRule"/>
</dbReference>
<dbReference type="GO" id="GO:0009245">
    <property type="term" value="P:lipid A biosynthetic process"/>
    <property type="evidence" value="ECO:0007669"/>
    <property type="project" value="TreeGrafter"/>
</dbReference>
<dbReference type="FunFam" id="1.10.1200.10:FF:000041">
    <property type="entry name" value="Acyl carrier protein"/>
    <property type="match status" value="1"/>
</dbReference>
<dbReference type="Gene3D" id="1.10.1200.10">
    <property type="entry name" value="ACP-like"/>
    <property type="match status" value="1"/>
</dbReference>
<dbReference type="HAMAP" id="MF_01217">
    <property type="entry name" value="Acyl_carrier"/>
    <property type="match status" value="1"/>
</dbReference>
<dbReference type="InterPro" id="IPR003231">
    <property type="entry name" value="ACP"/>
</dbReference>
<dbReference type="InterPro" id="IPR036736">
    <property type="entry name" value="ACP-like_sf"/>
</dbReference>
<dbReference type="InterPro" id="IPR009081">
    <property type="entry name" value="PP-bd_ACP"/>
</dbReference>
<dbReference type="InterPro" id="IPR006162">
    <property type="entry name" value="Ppantetheine_attach_site"/>
</dbReference>
<dbReference type="NCBIfam" id="TIGR00517">
    <property type="entry name" value="acyl_carrier"/>
    <property type="match status" value="1"/>
</dbReference>
<dbReference type="NCBIfam" id="NF002148">
    <property type="entry name" value="PRK00982.1-2"/>
    <property type="match status" value="1"/>
</dbReference>
<dbReference type="NCBIfam" id="NF002150">
    <property type="entry name" value="PRK00982.1-4"/>
    <property type="match status" value="1"/>
</dbReference>
<dbReference type="PANTHER" id="PTHR20863">
    <property type="entry name" value="ACYL CARRIER PROTEIN"/>
    <property type="match status" value="1"/>
</dbReference>
<dbReference type="PANTHER" id="PTHR20863:SF76">
    <property type="entry name" value="CARRIER DOMAIN-CONTAINING PROTEIN"/>
    <property type="match status" value="1"/>
</dbReference>
<dbReference type="Pfam" id="PF00550">
    <property type="entry name" value="PP-binding"/>
    <property type="match status" value="1"/>
</dbReference>
<dbReference type="SUPFAM" id="SSF47336">
    <property type="entry name" value="ACP-like"/>
    <property type="match status" value="1"/>
</dbReference>
<dbReference type="PROSITE" id="PS50075">
    <property type="entry name" value="CARRIER"/>
    <property type="match status" value="1"/>
</dbReference>
<dbReference type="PROSITE" id="PS00012">
    <property type="entry name" value="PHOSPHOPANTETHEINE"/>
    <property type="match status" value="1"/>
</dbReference>